<dbReference type="EMBL" id="CP000568">
    <property type="protein sequence ID" value="ABN53947.1"/>
    <property type="molecule type" value="Genomic_DNA"/>
</dbReference>
<dbReference type="RefSeq" id="WP_003514341.1">
    <property type="nucleotide sequence ID" value="NC_009012.1"/>
</dbReference>
<dbReference type="SMR" id="A3DJ18"/>
<dbReference type="STRING" id="203119.Cthe_2748"/>
<dbReference type="GeneID" id="35803496"/>
<dbReference type="KEGG" id="cth:Cthe_2748"/>
<dbReference type="eggNOG" id="COG0691">
    <property type="taxonomic scope" value="Bacteria"/>
</dbReference>
<dbReference type="HOGENOM" id="CLU_108953_0_1_9"/>
<dbReference type="OrthoDB" id="9805462at2"/>
<dbReference type="Proteomes" id="UP000002145">
    <property type="component" value="Chromosome"/>
</dbReference>
<dbReference type="GO" id="GO:0005829">
    <property type="term" value="C:cytosol"/>
    <property type="evidence" value="ECO:0007669"/>
    <property type="project" value="TreeGrafter"/>
</dbReference>
<dbReference type="GO" id="GO:0003723">
    <property type="term" value="F:RNA binding"/>
    <property type="evidence" value="ECO:0007669"/>
    <property type="project" value="UniProtKB-UniRule"/>
</dbReference>
<dbReference type="GO" id="GO:0070929">
    <property type="term" value="P:trans-translation"/>
    <property type="evidence" value="ECO:0007669"/>
    <property type="project" value="UniProtKB-UniRule"/>
</dbReference>
<dbReference type="CDD" id="cd09294">
    <property type="entry name" value="SmpB"/>
    <property type="match status" value="1"/>
</dbReference>
<dbReference type="Gene3D" id="2.40.280.10">
    <property type="match status" value="1"/>
</dbReference>
<dbReference type="HAMAP" id="MF_00023">
    <property type="entry name" value="SmpB"/>
    <property type="match status" value="1"/>
</dbReference>
<dbReference type="InterPro" id="IPR023620">
    <property type="entry name" value="SmpB"/>
</dbReference>
<dbReference type="InterPro" id="IPR000037">
    <property type="entry name" value="SsrA-bd_prot"/>
</dbReference>
<dbReference type="InterPro" id="IPR020081">
    <property type="entry name" value="SsrA-bd_prot_CS"/>
</dbReference>
<dbReference type="NCBIfam" id="NF003843">
    <property type="entry name" value="PRK05422.1"/>
    <property type="match status" value="1"/>
</dbReference>
<dbReference type="NCBIfam" id="TIGR00086">
    <property type="entry name" value="smpB"/>
    <property type="match status" value="1"/>
</dbReference>
<dbReference type="PANTHER" id="PTHR30308:SF2">
    <property type="entry name" value="SSRA-BINDING PROTEIN"/>
    <property type="match status" value="1"/>
</dbReference>
<dbReference type="PANTHER" id="PTHR30308">
    <property type="entry name" value="TMRNA-BINDING COMPONENT OF TRANS-TRANSLATION TAGGING COMPLEX"/>
    <property type="match status" value="1"/>
</dbReference>
<dbReference type="Pfam" id="PF01668">
    <property type="entry name" value="SmpB"/>
    <property type="match status" value="1"/>
</dbReference>
<dbReference type="SUPFAM" id="SSF74982">
    <property type="entry name" value="Small protein B (SmpB)"/>
    <property type="match status" value="1"/>
</dbReference>
<dbReference type="PROSITE" id="PS01317">
    <property type="entry name" value="SSRP"/>
    <property type="match status" value="1"/>
</dbReference>
<feature type="chain" id="PRO_0000331035" description="SsrA-binding protein">
    <location>
        <begin position="1"/>
        <end position="154"/>
    </location>
</feature>
<gene>
    <name evidence="1" type="primary">smpB</name>
    <name type="ordered locus">Cthe_2748</name>
</gene>
<comment type="function">
    <text evidence="1">Required for rescue of stalled ribosomes mediated by trans-translation. Binds to transfer-messenger RNA (tmRNA), required for stable association of tmRNA with ribosomes. tmRNA and SmpB together mimic tRNA shape, replacing the anticodon stem-loop with SmpB. tmRNA is encoded by the ssrA gene; the 2 termini fold to resemble tRNA(Ala) and it encodes a 'tag peptide', a short internal open reading frame. During trans-translation Ala-aminoacylated tmRNA acts like a tRNA, entering the A-site of stalled ribosomes, displacing the stalled mRNA. The ribosome then switches to translate the ORF on the tmRNA; the nascent peptide is terminated with the 'tag peptide' encoded by the tmRNA and targeted for degradation. The ribosome is freed to recommence translation, which seems to be the essential function of trans-translation.</text>
</comment>
<comment type="subcellular location">
    <subcellularLocation>
        <location evidence="1">Cytoplasm</location>
    </subcellularLocation>
    <text evidence="1">The tmRNA-SmpB complex associates with stalled 70S ribosomes.</text>
</comment>
<comment type="similarity">
    <text evidence="1">Belongs to the SmpB family.</text>
</comment>
<reference key="1">
    <citation type="submission" date="2007-02" db="EMBL/GenBank/DDBJ databases">
        <title>Complete sequence of Clostridium thermocellum ATCC 27405.</title>
        <authorList>
            <consortium name="US DOE Joint Genome Institute"/>
            <person name="Copeland A."/>
            <person name="Lucas S."/>
            <person name="Lapidus A."/>
            <person name="Barry K."/>
            <person name="Detter J.C."/>
            <person name="Glavina del Rio T."/>
            <person name="Hammon N."/>
            <person name="Israni S."/>
            <person name="Dalin E."/>
            <person name="Tice H."/>
            <person name="Pitluck S."/>
            <person name="Chertkov O."/>
            <person name="Brettin T."/>
            <person name="Bruce D."/>
            <person name="Han C."/>
            <person name="Tapia R."/>
            <person name="Gilna P."/>
            <person name="Schmutz J."/>
            <person name="Larimer F."/>
            <person name="Land M."/>
            <person name="Hauser L."/>
            <person name="Kyrpides N."/>
            <person name="Mikhailova N."/>
            <person name="Wu J.H.D."/>
            <person name="Newcomb M."/>
            <person name="Richardson P."/>
        </authorList>
    </citation>
    <scope>NUCLEOTIDE SEQUENCE [LARGE SCALE GENOMIC DNA]</scope>
    <source>
        <strain>ATCC 27405 / DSM 1237 / JCM 9322 / NBRC 103400 / NCIMB 10682 / NRRL B-4536 / VPI 7372</strain>
    </source>
</reference>
<accession>A3DJ18</accession>
<organism>
    <name type="scientific">Acetivibrio thermocellus (strain ATCC 27405 / DSM 1237 / JCM 9322 / NBRC 103400 / NCIMB 10682 / NRRL B-4536 / VPI 7372)</name>
    <name type="common">Clostridium thermocellum</name>
    <dbReference type="NCBI Taxonomy" id="203119"/>
    <lineage>
        <taxon>Bacteria</taxon>
        <taxon>Bacillati</taxon>
        <taxon>Bacillota</taxon>
        <taxon>Clostridia</taxon>
        <taxon>Eubacteriales</taxon>
        <taxon>Oscillospiraceae</taxon>
        <taxon>Acetivibrio</taxon>
    </lineage>
</organism>
<evidence type="ECO:0000255" key="1">
    <source>
        <dbReference type="HAMAP-Rule" id="MF_00023"/>
    </source>
</evidence>
<keyword id="KW-0963">Cytoplasm</keyword>
<keyword id="KW-1185">Reference proteome</keyword>
<keyword id="KW-0694">RNA-binding</keyword>
<protein>
    <recommendedName>
        <fullName evidence="1">SsrA-binding protein</fullName>
    </recommendedName>
    <alternativeName>
        <fullName evidence="1">Small protein B</fullName>
    </alternativeName>
</protein>
<name>SSRP_ACET2</name>
<sequence>MAKEEKRVVAQNRKARHDYFIEQTIEAGIVLSGTEVKSIRAGKVSLKDSYANVKNGEVFIYGMHISPYEQGNIFNKDPLRDRKLLLHRAEINKLIGYIQQKGMTLVPLEVYFKNGKVKIELGIAKGKKLYDKREDIAKRDALREIDRRLKENFR</sequence>
<proteinExistence type="inferred from homology"/>